<sequence length="360" mass="41667">MPSTLQALTKKVLATQPIFKDDYCILERCGLWWHEAPITIHHTCIDKQILVKTASFKHGLTLNVALMKAVQENNHDLIELFTEWGADISFGLVTVNMECTQDLCQKLGARKALSENKILEIFYNVKYVKTSSNIILCHELLSNNPLFLNNAQLKLRIFGELDALSINITLDNISFNEMLTRYWYSMAILYKLTEAIQYFYQRYSHFKDWRLICGVAYNNVFDLHEIYNKEKTNIDIDEMMQLACMYDGNYTTIYYCCMLGADINRAMITSVMNFCEGNLFLCIDLGADAFKESIEIASQANNWILINILLFKNYSPDSSLLSLKTTDPEKINVLLDEEKYKSKNMLMYEESLFHIYGTNT</sequence>
<organismHost>
    <name type="scientific">Ornithodoros</name>
    <name type="common">relapsing fever ticks</name>
    <dbReference type="NCBI Taxonomy" id="6937"/>
</organismHost>
<organismHost>
    <name type="scientific">Phacochoerus aethiopicus</name>
    <name type="common">Warthog</name>
    <dbReference type="NCBI Taxonomy" id="85517"/>
</organismHost>
<organismHost>
    <name type="scientific">Phacochoerus africanus</name>
    <name type="common">Warthog</name>
    <dbReference type="NCBI Taxonomy" id="41426"/>
</organismHost>
<organismHost>
    <name type="scientific">Potamochoerus larvatus</name>
    <name type="common">Bushpig</name>
    <dbReference type="NCBI Taxonomy" id="273792"/>
</organismHost>
<organismHost>
    <name type="scientific">Sus scrofa</name>
    <name type="common">Pig</name>
    <dbReference type="NCBI Taxonomy" id="9823"/>
</organismHost>
<name>3601L_ASFWA</name>
<proteinExistence type="inferred from homology"/>
<evidence type="ECO:0000250" key="1"/>
<evidence type="ECO:0000305" key="2"/>
<organism>
    <name type="scientific">African swine fever virus (isolate Warthog/Namibia/Wart80/1980)</name>
    <name type="common">ASFV</name>
    <dbReference type="NCBI Taxonomy" id="561444"/>
    <lineage>
        <taxon>Viruses</taxon>
        <taxon>Varidnaviria</taxon>
        <taxon>Bamfordvirae</taxon>
        <taxon>Nucleocytoviricota</taxon>
        <taxon>Pokkesviricetes</taxon>
        <taxon>Asfuvirales</taxon>
        <taxon>Asfarviridae</taxon>
        <taxon>Asfivirus</taxon>
        <taxon>African swine fever virus</taxon>
    </lineage>
</organism>
<reference key="1">
    <citation type="submission" date="2003-03" db="EMBL/GenBank/DDBJ databases">
        <title>African swine fever virus genomes.</title>
        <authorList>
            <person name="Kutish G.F."/>
            <person name="Rock D.L."/>
        </authorList>
    </citation>
    <scope>NUCLEOTIDE SEQUENCE [LARGE SCALE GENOMIC DNA]</scope>
</reference>
<gene>
    <name type="ordered locus">War-002</name>
</gene>
<accession>P0C9L8</accession>
<feature type="chain" id="PRO_0000373244" description="Protein MGF 360-1L">
    <location>
        <begin position="1"/>
        <end position="360"/>
    </location>
</feature>
<dbReference type="EMBL" id="AY261366">
    <property type="status" value="NOT_ANNOTATED_CDS"/>
    <property type="molecule type" value="Genomic_DNA"/>
</dbReference>
<dbReference type="SMR" id="P0C9L8"/>
<dbReference type="Proteomes" id="UP000000858">
    <property type="component" value="Segment"/>
</dbReference>
<dbReference type="GO" id="GO:0042330">
    <property type="term" value="P:taxis"/>
    <property type="evidence" value="ECO:0007669"/>
    <property type="project" value="InterPro"/>
</dbReference>
<dbReference type="InterPro" id="IPR002595">
    <property type="entry name" value="ASFV_MGF360"/>
</dbReference>
<dbReference type="Pfam" id="PF01671">
    <property type="entry name" value="ASFV_360"/>
    <property type="match status" value="1"/>
</dbReference>
<protein>
    <recommendedName>
        <fullName>Protein MGF 360-1L</fullName>
    </recommendedName>
</protein>
<comment type="function">
    <text evidence="1">Plays a role in virus cell tropism, and may be required for efficient virus replication in macrophages.</text>
</comment>
<comment type="similarity">
    <text evidence="2">Belongs to the asfivirus MGF 360 family.</text>
</comment>